<organism>
    <name type="scientific">Salmonella paratyphi B (strain ATCC BAA-1250 / SPB7)</name>
    <dbReference type="NCBI Taxonomy" id="1016998"/>
    <lineage>
        <taxon>Bacteria</taxon>
        <taxon>Pseudomonadati</taxon>
        <taxon>Pseudomonadota</taxon>
        <taxon>Gammaproteobacteria</taxon>
        <taxon>Enterobacterales</taxon>
        <taxon>Enterobacteriaceae</taxon>
        <taxon>Salmonella</taxon>
    </lineage>
</organism>
<name>CYSD_SALPB</name>
<keyword id="KW-0067">ATP-binding</keyword>
<keyword id="KW-0547">Nucleotide-binding</keyword>
<keyword id="KW-0548">Nucleotidyltransferase</keyword>
<keyword id="KW-0808">Transferase</keyword>
<dbReference type="EC" id="2.7.7.4" evidence="1"/>
<dbReference type="EMBL" id="CP000886">
    <property type="protein sequence ID" value="ABX68990.1"/>
    <property type="molecule type" value="Genomic_DNA"/>
</dbReference>
<dbReference type="RefSeq" id="WP_000372384.1">
    <property type="nucleotide sequence ID" value="NC_010102.1"/>
</dbReference>
<dbReference type="SMR" id="A9N2D9"/>
<dbReference type="KEGG" id="spq:SPAB_03650"/>
<dbReference type="PATRIC" id="fig|1016998.12.peg.3437"/>
<dbReference type="HOGENOM" id="CLU_043026_0_0_6"/>
<dbReference type="BioCyc" id="SENT1016998:SPAB_RS14875-MONOMER"/>
<dbReference type="UniPathway" id="UPA00140">
    <property type="reaction ID" value="UER00204"/>
</dbReference>
<dbReference type="Proteomes" id="UP000008556">
    <property type="component" value="Chromosome"/>
</dbReference>
<dbReference type="GO" id="GO:0005524">
    <property type="term" value="F:ATP binding"/>
    <property type="evidence" value="ECO:0007669"/>
    <property type="project" value="UniProtKB-KW"/>
</dbReference>
<dbReference type="GO" id="GO:0004781">
    <property type="term" value="F:sulfate adenylyltransferase (ATP) activity"/>
    <property type="evidence" value="ECO:0007669"/>
    <property type="project" value="UniProtKB-UniRule"/>
</dbReference>
<dbReference type="GO" id="GO:0070814">
    <property type="term" value="P:hydrogen sulfide biosynthetic process"/>
    <property type="evidence" value="ECO:0007669"/>
    <property type="project" value="UniProtKB-UniRule"/>
</dbReference>
<dbReference type="GO" id="GO:0000103">
    <property type="term" value="P:sulfate assimilation"/>
    <property type="evidence" value="ECO:0007669"/>
    <property type="project" value="UniProtKB-UniRule"/>
</dbReference>
<dbReference type="CDD" id="cd23946">
    <property type="entry name" value="Sulfate_adenylyltransferase_2"/>
    <property type="match status" value="1"/>
</dbReference>
<dbReference type="FunFam" id="3.40.50.620:FF:000002">
    <property type="entry name" value="Sulfate adenylyltransferase subunit 2"/>
    <property type="match status" value="1"/>
</dbReference>
<dbReference type="Gene3D" id="3.40.50.620">
    <property type="entry name" value="HUPs"/>
    <property type="match status" value="1"/>
</dbReference>
<dbReference type="HAMAP" id="MF_00064">
    <property type="entry name" value="Sulf_adenylyltr_sub2"/>
    <property type="match status" value="1"/>
</dbReference>
<dbReference type="InterPro" id="IPR002500">
    <property type="entry name" value="PAPS_reduct_dom"/>
</dbReference>
<dbReference type="InterPro" id="IPR014729">
    <property type="entry name" value="Rossmann-like_a/b/a_fold"/>
</dbReference>
<dbReference type="InterPro" id="IPR011784">
    <property type="entry name" value="SO4_adenylTrfase_ssu"/>
</dbReference>
<dbReference type="InterPro" id="IPR050128">
    <property type="entry name" value="Sulfate_adenylyltrnsfr_sub2"/>
</dbReference>
<dbReference type="NCBIfam" id="TIGR02039">
    <property type="entry name" value="CysD"/>
    <property type="match status" value="1"/>
</dbReference>
<dbReference type="NCBIfam" id="NF003587">
    <property type="entry name" value="PRK05253.1"/>
    <property type="match status" value="1"/>
</dbReference>
<dbReference type="NCBIfam" id="NF009214">
    <property type="entry name" value="PRK12563.1"/>
    <property type="match status" value="1"/>
</dbReference>
<dbReference type="PANTHER" id="PTHR43196">
    <property type="entry name" value="SULFATE ADENYLYLTRANSFERASE SUBUNIT 2"/>
    <property type="match status" value="1"/>
</dbReference>
<dbReference type="PANTHER" id="PTHR43196:SF1">
    <property type="entry name" value="SULFATE ADENYLYLTRANSFERASE SUBUNIT 2"/>
    <property type="match status" value="1"/>
</dbReference>
<dbReference type="Pfam" id="PF01507">
    <property type="entry name" value="PAPS_reduct"/>
    <property type="match status" value="1"/>
</dbReference>
<dbReference type="PIRSF" id="PIRSF002936">
    <property type="entry name" value="CysDAde_trans"/>
    <property type="match status" value="1"/>
</dbReference>
<dbReference type="SUPFAM" id="SSF52402">
    <property type="entry name" value="Adenine nucleotide alpha hydrolases-like"/>
    <property type="match status" value="1"/>
</dbReference>
<protein>
    <recommendedName>
        <fullName evidence="1">Sulfate adenylyltransferase subunit 2</fullName>
        <ecNumber evidence="1">2.7.7.4</ecNumber>
    </recommendedName>
    <alternativeName>
        <fullName evidence="1">ATP-sulfurylase small subunit</fullName>
    </alternativeName>
    <alternativeName>
        <fullName evidence="1">Sulfate adenylate transferase</fullName>
        <shortName evidence="1">SAT</shortName>
    </alternativeName>
</protein>
<reference key="1">
    <citation type="submission" date="2007-11" db="EMBL/GenBank/DDBJ databases">
        <authorList>
            <consortium name="The Salmonella enterica serovar Paratyphi B Genome Sequencing Project"/>
            <person name="McClelland M."/>
            <person name="Sanderson E.K."/>
            <person name="Porwollik S."/>
            <person name="Spieth J."/>
            <person name="Clifton W.S."/>
            <person name="Fulton R."/>
            <person name="Cordes M."/>
            <person name="Wollam A."/>
            <person name="Shah N."/>
            <person name="Pepin K."/>
            <person name="Bhonagiri V."/>
            <person name="Nash W."/>
            <person name="Johnson M."/>
            <person name="Thiruvilangam P."/>
            <person name="Wilson R."/>
        </authorList>
    </citation>
    <scope>NUCLEOTIDE SEQUENCE [LARGE SCALE GENOMIC DNA]</scope>
    <source>
        <strain>ATCC BAA-1250 / SPB7</strain>
    </source>
</reference>
<gene>
    <name evidence="1" type="primary">cysD</name>
    <name type="ordered locus">SPAB_03650</name>
</gene>
<evidence type="ECO:0000255" key="1">
    <source>
        <dbReference type="HAMAP-Rule" id="MF_00064"/>
    </source>
</evidence>
<accession>A9N2D9</accession>
<proteinExistence type="inferred from homology"/>
<feature type="chain" id="PRO_1000075081" description="Sulfate adenylyltransferase subunit 2">
    <location>
        <begin position="1"/>
        <end position="302"/>
    </location>
</feature>
<comment type="function">
    <text evidence="1">With CysN forms the ATP sulfurylase (ATPS) that catalyzes the adenylation of sulfate producing adenosine 5'-phosphosulfate (APS) and diphosphate, the first enzymatic step in sulfur assimilation pathway. APS synthesis involves the formation of a high-energy phosphoric-sulfuric acid anhydride bond driven by GTP hydrolysis by CysN coupled to ATP hydrolysis by CysD.</text>
</comment>
<comment type="catalytic activity">
    <reaction evidence="1">
        <text>sulfate + ATP + H(+) = adenosine 5'-phosphosulfate + diphosphate</text>
        <dbReference type="Rhea" id="RHEA:18133"/>
        <dbReference type="ChEBI" id="CHEBI:15378"/>
        <dbReference type="ChEBI" id="CHEBI:16189"/>
        <dbReference type="ChEBI" id="CHEBI:30616"/>
        <dbReference type="ChEBI" id="CHEBI:33019"/>
        <dbReference type="ChEBI" id="CHEBI:58243"/>
        <dbReference type="EC" id="2.7.7.4"/>
    </reaction>
</comment>
<comment type="pathway">
    <text evidence="1">Sulfur metabolism; hydrogen sulfide biosynthesis; sulfite from sulfate: step 1/3.</text>
</comment>
<comment type="subunit">
    <text evidence="1">Heterodimer composed of CysD, the smaller subunit, and CysN.</text>
</comment>
<comment type="similarity">
    <text evidence="1">Belongs to the PAPS reductase family. CysD subfamily.</text>
</comment>
<sequence length="302" mass="35176">MDQKRLTHLRQLEAESIHIIREVAAEFANPVMLYSIGKDSSVMLHLARKAFYPGTLPFPLLHVDTGWKFREMYAFRDRTANAYGCELLVHKNPEGVAMGINPFVHGSAKHTDIMKTEGLKQALNKYGFDAAFGGARRDEEKSRAKERIYSFRDRFHRWDPKNQRPELWRNYNGQINKGESIRVFPLSNWTEQDIWQYIWLENIDIVPLYLAAERPVLERDGMLMMVDDDRIDLQPGEVIKKRMVRFRTLGCWPLTGAVESHAQTLPEIIEEMLVSTTSERQGRMIDRDQAGSMELKKRQGYF</sequence>